<name>NRAM_I67A0</name>
<sequence>MNPNQKIITIGSVSLTIATVCFLMQIAILVTTVTLHFKQHECDSPASNQVMPCEPIIIERNITEIVYLNNTTIEKEICPKVVEYRNWSKPQCQITGFAPFSKDNSIRLSAGGDIWVTREPYVSCDPVKCYQFALGQGTTLDNKHSNDTVHDRIPHRTLLMNELGVPFHLGTRQVCIAWSSSSCHDGKAWLHVCITGDDKNATASFIYDGRLVDSIGSWSQNILRTQESECVCINGTCTVVMTDGSASGRADTRILFIEEGKIVHISPLAGSAQHVEECSCYPRYPGVRCICRDNWKGSNRPVVDINMEDYSIDSSYVCSGLVGDTPRNDDRSSNSNCRNPNNERGTQGVKGWAFDNGNDLWMGRTISKDLRSGYETFKVIGGWSTPNSKSQINRQVIVDSDNRSGYSGIFSVEGKSCINRCFYVELIRGRKQETRVWWTSNSIVVFCGTSGTYGTGSWPDGANINFMPI</sequence>
<organismHost>
    <name type="scientific">Aves</name>
    <dbReference type="NCBI Taxonomy" id="8782"/>
</organismHost>
<organismHost>
    <name type="scientific">Homo sapiens</name>
    <name type="common">Human</name>
    <dbReference type="NCBI Taxonomy" id="9606"/>
</organismHost>
<gene>
    <name evidence="1" type="primary">NA</name>
</gene>
<accession>P06820</accession>
<accession>Q6XUB0</accession>
<evidence type="ECO:0000255" key="1">
    <source>
        <dbReference type="HAMAP-Rule" id="MF_04071"/>
    </source>
</evidence>
<evidence type="ECO:0000256" key="2">
    <source>
        <dbReference type="SAM" id="MobiDB-lite"/>
    </source>
</evidence>
<evidence type="ECO:0000269" key="3">
    <source>
    </source>
</evidence>
<evidence type="ECO:0000269" key="4">
    <source>
    </source>
</evidence>
<evidence type="ECO:0000269" key="5">
    <source>
    </source>
</evidence>
<evidence type="ECO:0007829" key="6">
    <source>
        <dbReference type="PDB" id="1ING"/>
    </source>
</evidence>
<evidence type="ECO:0007829" key="7">
    <source>
        <dbReference type="PDB" id="1IVD"/>
    </source>
</evidence>
<evidence type="ECO:0007829" key="8">
    <source>
        <dbReference type="PDB" id="1IVG"/>
    </source>
</evidence>
<evidence type="ECO:0007829" key="9">
    <source>
        <dbReference type="PDB" id="2BAT"/>
    </source>
</evidence>
<keyword id="KW-0002">3D-structure</keyword>
<keyword id="KW-0106">Calcium</keyword>
<keyword id="KW-1015">Disulfide bond</keyword>
<keyword id="KW-0325">Glycoprotein</keyword>
<keyword id="KW-0326">Glycosidase</keyword>
<keyword id="KW-1032">Host cell membrane</keyword>
<keyword id="KW-1043">Host membrane</keyword>
<keyword id="KW-0378">Hydrolase</keyword>
<keyword id="KW-0472">Membrane</keyword>
<keyword id="KW-0479">Metal-binding</keyword>
<keyword id="KW-0735">Signal-anchor</keyword>
<keyword id="KW-0812">Transmembrane</keyword>
<keyword id="KW-1133">Transmembrane helix</keyword>
<keyword id="KW-0946">Virion</keyword>
<organism>
    <name type="scientific">Influenza A virus (strain A/Tokyo/3/1967 H2N2)</name>
    <dbReference type="NCBI Taxonomy" id="380960"/>
    <lineage>
        <taxon>Viruses</taxon>
        <taxon>Riboviria</taxon>
        <taxon>Orthornavirae</taxon>
        <taxon>Negarnaviricota</taxon>
        <taxon>Polyploviricotina</taxon>
        <taxon>Insthoviricetes</taxon>
        <taxon>Articulavirales</taxon>
        <taxon>Orthomyxoviridae</taxon>
        <taxon>Alphainfluenzavirus</taxon>
        <taxon>Alphainfluenzavirus influenzae</taxon>
        <taxon>Influenza A virus</taxon>
    </lineage>
</organism>
<dbReference type="EC" id="3.2.1.18" evidence="1"/>
<dbReference type="EMBL" id="K01393">
    <property type="protein sequence ID" value="AAB05621.1"/>
    <property type="molecule type" value="Genomic_RNA"/>
</dbReference>
<dbReference type="EMBL" id="AY209929">
    <property type="protein sequence ID" value="AAO46245.1"/>
    <property type="molecule type" value="Genomic_RNA"/>
</dbReference>
<dbReference type="PDB" id="1ING">
    <property type="method" value="X-ray"/>
    <property type="resolution" value="2.40 A"/>
    <property type="chains" value="A/B=82-469"/>
</dbReference>
<dbReference type="PDB" id="1INH">
    <property type="method" value="X-ray"/>
    <property type="resolution" value="2.40 A"/>
    <property type="chains" value="A/B=82-469"/>
</dbReference>
<dbReference type="PDB" id="1INW">
    <property type="method" value="X-ray"/>
    <property type="resolution" value="2.40 A"/>
    <property type="chains" value="A=82-469"/>
</dbReference>
<dbReference type="PDB" id="1INX">
    <property type="method" value="X-ray"/>
    <property type="resolution" value="2.40 A"/>
    <property type="chains" value="A=82-469"/>
</dbReference>
<dbReference type="PDB" id="1IVC">
    <property type="method" value="X-ray"/>
    <property type="resolution" value="2.40 A"/>
    <property type="chains" value="A/B=82-469"/>
</dbReference>
<dbReference type="PDB" id="1IVD">
    <property type="method" value="X-ray"/>
    <property type="resolution" value="1.90 A"/>
    <property type="chains" value="A/B=82-469"/>
</dbReference>
<dbReference type="PDB" id="1IVE">
    <property type="method" value="X-ray"/>
    <property type="resolution" value="2.40 A"/>
    <property type="chains" value="A/B=82-469"/>
</dbReference>
<dbReference type="PDB" id="1IVF">
    <property type="method" value="X-ray"/>
    <property type="resolution" value="2.40 A"/>
    <property type="chains" value="A/B=82-469"/>
</dbReference>
<dbReference type="PDB" id="1IVG">
    <property type="method" value="X-ray"/>
    <property type="resolution" value="1.90 A"/>
    <property type="chains" value="A/B=82-469"/>
</dbReference>
<dbReference type="PDB" id="1NN2">
    <property type="method" value="X-ray"/>
    <property type="resolution" value="2.20 A"/>
    <property type="chains" value="A=82-469"/>
</dbReference>
<dbReference type="PDB" id="2BAT">
    <property type="method" value="X-ray"/>
    <property type="resolution" value="2.00 A"/>
    <property type="chains" value="A=82-469"/>
</dbReference>
<dbReference type="PDBsum" id="1ING"/>
<dbReference type="PDBsum" id="1INH"/>
<dbReference type="PDBsum" id="1INW"/>
<dbReference type="PDBsum" id="1INX"/>
<dbReference type="PDBsum" id="1IVC"/>
<dbReference type="PDBsum" id="1IVD"/>
<dbReference type="PDBsum" id="1IVE"/>
<dbReference type="PDBsum" id="1IVF"/>
<dbReference type="PDBsum" id="1IVG"/>
<dbReference type="PDBsum" id="1NN2"/>
<dbReference type="PDBsum" id="2BAT"/>
<dbReference type="SMR" id="P06820"/>
<dbReference type="BindingDB" id="P06820"/>
<dbReference type="DrugBank" id="DB02829">
    <property type="generic name" value="4-(Acetylamino)-3-[(Aminoacetyl)Amino]Benzoic Acid"/>
</dbReference>
<dbReference type="DrugBank" id="DB04565">
    <property type="generic name" value="4-(Acetylamino)-3-[(Hydroxyacetyl)Amino]Benzoic Acid"/>
</dbReference>
<dbReference type="DrugBank" id="DB02268">
    <property type="generic name" value="4-(Acetylamino)-3-Amino Benzoic Acid"/>
</dbReference>
<dbReference type="DrugBank" id="DB08570">
    <property type="generic name" value="4-(ACETYLAMINO)-3-HYDROXY-5-NITROBENZOIC ACID"/>
</dbReference>
<dbReference type="DrugBank" id="DB08571">
    <property type="generic name" value="4-(ACETYLAMINO)-5-AMINO-3-HYDROXYBENZOIC ACID"/>
</dbReference>
<dbReference type="CAZy" id="GH34">
    <property type="family name" value="Glycoside Hydrolase Family 34"/>
</dbReference>
<dbReference type="GlyCosmos" id="P06820">
    <property type="glycosylation" value="8 sites, No reported glycans"/>
</dbReference>
<dbReference type="iPTMnet" id="P06820"/>
<dbReference type="BRENDA" id="3.2.1.18">
    <property type="organism ID" value="7479"/>
</dbReference>
<dbReference type="SABIO-RK" id="P06820"/>
<dbReference type="EvolutionaryTrace" id="P06820"/>
<dbReference type="PRO" id="PR:P06820"/>
<dbReference type="GO" id="GO:0020002">
    <property type="term" value="C:host cell plasma membrane"/>
    <property type="evidence" value="ECO:0007669"/>
    <property type="project" value="UniProtKB-SubCell"/>
</dbReference>
<dbReference type="GO" id="GO:0016020">
    <property type="term" value="C:membrane"/>
    <property type="evidence" value="ECO:0007669"/>
    <property type="project" value="UniProtKB-UniRule"/>
</dbReference>
<dbReference type="GO" id="GO:0055036">
    <property type="term" value="C:virion membrane"/>
    <property type="evidence" value="ECO:0007669"/>
    <property type="project" value="UniProtKB-SubCell"/>
</dbReference>
<dbReference type="GO" id="GO:0004308">
    <property type="term" value="F:exo-alpha-sialidase activity"/>
    <property type="evidence" value="ECO:0007669"/>
    <property type="project" value="UniProtKB-UniRule"/>
</dbReference>
<dbReference type="GO" id="GO:0046872">
    <property type="term" value="F:metal ion binding"/>
    <property type="evidence" value="ECO:0007669"/>
    <property type="project" value="UniProtKB-UniRule"/>
</dbReference>
<dbReference type="GO" id="GO:0005975">
    <property type="term" value="P:carbohydrate metabolic process"/>
    <property type="evidence" value="ECO:0007669"/>
    <property type="project" value="InterPro"/>
</dbReference>
<dbReference type="GO" id="GO:0046761">
    <property type="term" value="P:viral budding from plasma membrane"/>
    <property type="evidence" value="ECO:0007669"/>
    <property type="project" value="UniProtKB-UniRule"/>
</dbReference>
<dbReference type="CDD" id="cd15483">
    <property type="entry name" value="Influenza_NA"/>
    <property type="match status" value="1"/>
</dbReference>
<dbReference type="Gene3D" id="2.120.10.10">
    <property type="match status" value="1"/>
</dbReference>
<dbReference type="HAMAP" id="MF_04071">
    <property type="entry name" value="INFV_NRAM"/>
    <property type="match status" value="1"/>
</dbReference>
<dbReference type="InterPro" id="IPR001860">
    <property type="entry name" value="Glyco_hydro_34"/>
</dbReference>
<dbReference type="InterPro" id="IPR033654">
    <property type="entry name" value="Sialidase_Influenza_A/B"/>
</dbReference>
<dbReference type="InterPro" id="IPR036278">
    <property type="entry name" value="Sialidase_sf"/>
</dbReference>
<dbReference type="Pfam" id="PF00064">
    <property type="entry name" value="Neur"/>
    <property type="match status" value="1"/>
</dbReference>
<dbReference type="SUPFAM" id="SSF50939">
    <property type="entry name" value="Sialidases"/>
    <property type="match status" value="1"/>
</dbReference>
<proteinExistence type="evidence at protein level"/>
<comment type="function">
    <text evidence="1">Catalyzes the removal of terminal sialic acid residues from viral and cellular glycoconjugates. Cleaves off the terminal sialic acids on the glycosylated HA during virus budding to facilitate virus release. Additionally helps virus spread through the circulation by further removing sialic acids from the cell surface. These cleavages prevent self-aggregation and ensure the efficient spread of the progeny virus from cell to cell. Otherwise, infection would be limited to one round of replication. Described as a receptor-destroying enzyme because it cleaves a terminal sialic acid from the cellular receptors. May facilitate viral invasion of the upper airways by cleaving the sialic acid moieties on the mucin of the airway epithelial cells. Likely to plays a role in the budding process through its association with lipid rafts during intracellular transport. May additionally display a raft-association independent effect on budding. Plays a role in the determination of host range restriction on replication and virulence. Sialidase activity in late endosome/lysosome traffic seems to enhance virus replication.</text>
</comment>
<comment type="catalytic activity">
    <reaction evidence="1">
        <text>Hydrolysis of alpha-(2-&gt;3)-, alpha-(2-&gt;6)-, alpha-(2-&gt;8)- glycosidic linkages of terminal sialic acid residues in oligosaccharides, glycoproteins, glycolipids, colominic acid and synthetic substrates.</text>
        <dbReference type="EC" id="3.2.1.18"/>
    </reaction>
</comment>
<comment type="cofactor">
    <cofactor evidence="1 3 4 5">
        <name>Ca(2+)</name>
        <dbReference type="ChEBI" id="CHEBI:29108"/>
    </cofactor>
    <text evidence="3 4 5">Binds 1 Ca(2+) ion per subunit.</text>
</comment>
<comment type="activity regulation">
    <text evidence="1">Inhibited by the neuraminidase inhibitors zanamivir (Relenza) and oseltamivir (Tamiflu). These drugs interfere with the release of progeny virus from infected cells and are effective against all influenza strains. Resistance to neuraminidase inhibitors is quite rare.</text>
</comment>
<comment type="subunit">
    <text evidence="1 3 4 5">Homotetramer.</text>
</comment>
<comment type="subcellular location">
    <subcellularLocation>
        <location evidence="1">Virion membrane</location>
    </subcellularLocation>
    <subcellularLocation>
        <location evidence="1">Host apical cell membrane</location>
        <topology evidence="1">Single-pass type II membrane protein</topology>
    </subcellularLocation>
    <text evidence="1">Preferentially accumulates at the apical plasma membrane in infected polarized epithelial cells, which is the virus assembly site. Uses lipid rafts for cell surface transport and apical sorting. In the virion, forms a mushroom-shaped spike on the surface of the membrane.</text>
</comment>
<comment type="domain">
    <text evidence="1">Intact N-terminus is essential for virion morphogenesis. Possesses two apical sorting signals, one in the ectodomain, which is likely to be a glycan, and the other in the transmembrane domain. The transmembrane domain also plays a role in lipid raft association.</text>
</comment>
<comment type="PTM">
    <text evidence="1 3 4 5">N-glycosylated.</text>
</comment>
<comment type="miscellaneous">
    <text>The influenza A genome consist of 8 RNA segments. Genetic variation of hemagglutinin and/or neuraminidase genes results in the emergence of new influenza strains. The mechanism of variation can be the result of point mutations or the result of genetic reassortment between segments of two different strains.</text>
</comment>
<comment type="similarity">
    <text evidence="1">Belongs to the glycosyl hydrolase 34 family.</text>
</comment>
<protein>
    <recommendedName>
        <fullName evidence="1">Neuraminidase</fullName>
        <ecNumber evidence="1">3.2.1.18</ecNumber>
    </recommendedName>
</protein>
<reference key="1">
    <citation type="journal article" date="1984" name="Virology">
        <title>Sequence of the neuraminidase gene of influenza virus A/Tokyo/3/67 and previously uncharacterized monoclonal variants.</title>
        <authorList>
            <person name="Lentz M.R."/>
            <person name="Air G.M."/>
            <person name="Laver W.G."/>
            <person name="Webster R.G."/>
        </authorList>
    </citation>
    <scope>NUCLEOTIDE SEQUENCE [GENOMIC RNA]</scope>
</reference>
<reference key="2">
    <citation type="submission" date="1996-07" db="UniProtKB">
        <authorList>
            <person name="Air G.M."/>
        </authorList>
    </citation>
    <scope>SEQUENCE REVISION TO 420</scope>
</reference>
<reference key="3">
    <citation type="journal article" date="2004" name="Virology">
        <title>Genetic analysis of human H2N2 and early H3N2 influenza viruses, 1957-1972: evidence for genetic divergence and multiple reassortment events.</title>
        <authorList>
            <person name="Lindstrom S.E."/>
            <person name="Cox N.J."/>
            <person name="Klimov A."/>
        </authorList>
    </citation>
    <scope>NUCLEOTIDE SEQUENCE [GENOMIC RNA]</scope>
</reference>
<reference key="4">
    <citation type="journal article" date="2004" name="Virus Res.">
        <title>Assembly and budding of influenza virus.</title>
        <authorList>
            <person name="Nayak D.P."/>
            <person name="Hui E.K."/>
            <person name="Barman S."/>
        </authorList>
    </citation>
    <scope>REVIEW</scope>
</reference>
<reference key="5">
    <citation type="journal article" date="2005" name="N. Engl. J. Med.">
        <title>Neuraminidase inhibitors for influenza.</title>
        <authorList>
            <person name="Moscona A."/>
        </authorList>
    </citation>
    <scope>REVIEW</scope>
</reference>
<reference key="6">
    <citation type="journal article" date="2005" name="Biol. Pharm. Bull.">
        <title>Sialobiology of influenza: molecular mechanism of host range variation of influenza viruses.</title>
        <authorList>
            <person name="Suzuki Y."/>
        </authorList>
    </citation>
    <scope>REVIEW</scope>
</reference>
<reference key="7">
    <citation type="journal article" date="1991" name="J. Mol. Biol.">
        <title>Three-dimensional structure of the neuraminidase of influenza virus A/Tokyo/3/67 at 2.2-A resolution.</title>
        <authorList>
            <person name="Varghese J.N."/>
            <person name="Colman P.M."/>
        </authorList>
    </citation>
    <scope>X-RAY CRYSTALLOGRAPHY (2.20 ANGSTROMS) OF 82-469 IN COMPLEX WITH CALCIUM</scope>
    <scope>GLYCOSYLATION AT ASN-86; ASN-146 AND ASN-200</scope>
    <scope>COFACTOR</scope>
    <scope>SUBUNIT</scope>
    <scope>DISULFIDE BOND</scope>
</reference>
<reference key="8">
    <citation type="journal article" date="1995" name="J. Mol. Biol.">
        <title>A sialic acid-derived phosphonate analog inhibits different strains of influenza virus neuraminidase with different efficiencies.</title>
        <authorList>
            <person name="White C.L."/>
            <person name="Janakiraman M.N."/>
            <person name="Laver W.G."/>
            <person name="Philippon C."/>
            <person name="Vasella A."/>
            <person name="Air G.M."/>
            <person name="Luo M."/>
        </authorList>
    </citation>
    <scope>X-RAY CRYSTALLOGRAPHY (2.40 ANGSTROMS) OF 82-469 IN COMPLEX WITH SUBSTRATE ANALOG AND CALCIUM</scope>
    <scope>GLYCOSYLATION AT ASN-86; ASN-146; ASN-200 AND ASN-234</scope>
    <scope>COFACTOR</scope>
    <scope>SUBUNIT</scope>
    <scope>DISULFIDE BOND</scope>
</reference>
<reference key="9">
    <citation type="journal article" date="1995" name="Biochemistry">
        <title>Structures of aromatic inhibitors of influenza virus neuraminidase.</title>
        <authorList>
            <person name="Jedrzejas M.J."/>
            <person name="Singh S."/>
            <person name="Brouillette W.J."/>
            <person name="Laver W.G."/>
            <person name="Air G.M."/>
            <person name="Luo M."/>
        </authorList>
    </citation>
    <scope>X-RAY CRYSTALLOGRAPHY (1.90 ANGSTROMS) OF 82-469 IN COMPLEX WITH 2-DEOXY-2,3-DEHYDRO-N-ACETYL-NEURAMINIC ACID AND CALCIUM</scope>
    <scope>DISULFIDE BONDS</scope>
    <scope>GLYCOSYLATION AT ASN-86; ASN-146; ASN-200 AND ASN-234</scope>
    <scope>COFACTOR</scope>
</reference>
<feature type="chain" id="PRO_0000078720" description="Neuraminidase">
    <location>
        <begin position="1"/>
        <end position="469"/>
    </location>
</feature>
<feature type="topological domain" description="Intravirion" evidence="1">
    <location>
        <begin position="1"/>
        <end position="9"/>
    </location>
</feature>
<feature type="transmembrane region" description="Helical" evidence="1">
    <location>
        <begin position="10"/>
        <end position="30"/>
    </location>
</feature>
<feature type="topological domain" description="Virion surface" evidence="1">
    <location>
        <begin position="31"/>
        <end position="469"/>
    </location>
</feature>
<feature type="region of interest" description="Involved in apical transport and lipid raft association" evidence="1">
    <location>
        <begin position="11"/>
        <end position="33"/>
    </location>
</feature>
<feature type="region of interest" description="Hypervariable stalk region" evidence="1">
    <location>
        <begin position="36"/>
        <end position="88"/>
    </location>
</feature>
<feature type="region of interest" description="Head of neuraminidase" evidence="1">
    <location>
        <begin position="91"/>
        <end position="469"/>
    </location>
</feature>
<feature type="region of interest" description="Disordered" evidence="2">
    <location>
        <begin position="324"/>
        <end position="349"/>
    </location>
</feature>
<feature type="compositionally biased region" description="Low complexity" evidence="2">
    <location>
        <begin position="333"/>
        <end position="342"/>
    </location>
</feature>
<feature type="active site" description="Proton donor/acceptor" evidence="1">
    <location>
        <position position="151"/>
    </location>
</feature>
<feature type="active site" description="Nucleophile" evidence="1">
    <location>
        <position position="406"/>
    </location>
</feature>
<feature type="binding site" evidence="1">
    <location>
        <position position="118"/>
    </location>
    <ligand>
        <name>substrate</name>
    </ligand>
</feature>
<feature type="binding site" evidence="1">
    <location>
        <position position="152"/>
    </location>
    <ligand>
        <name>substrate</name>
    </ligand>
</feature>
<feature type="binding site" evidence="1">
    <location>
        <begin position="276"/>
        <end position="277"/>
    </location>
    <ligand>
        <name>substrate</name>
    </ligand>
</feature>
<feature type="binding site" evidence="1">
    <location>
        <position position="292"/>
    </location>
    <ligand>
        <name>substrate</name>
    </ligand>
</feature>
<feature type="binding site" evidence="1 3 4 5">
    <location>
        <position position="293"/>
    </location>
    <ligand>
        <name>Ca(2+)</name>
        <dbReference type="ChEBI" id="CHEBI:29108"/>
    </ligand>
</feature>
<feature type="binding site" evidence="1 3 4 5">
    <location>
        <position position="297"/>
    </location>
    <ligand>
        <name>Ca(2+)</name>
        <dbReference type="ChEBI" id="CHEBI:29108"/>
    </ligand>
</feature>
<feature type="binding site" evidence="1 3 4 5">
    <location>
        <position position="324"/>
    </location>
    <ligand>
        <name>Ca(2+)</name>
        <dbReference type="ChEBI" id="CHEBI:29108"/>
    </ligand>
</feature>
<feature type="binding site" evidence="1 3 4 5">
    <location>
        <position position="345"/>
    </location>
    <ligand>
        <name>Ca(2+)</name>
        <dbReference type="ChEBI" id="CHEBI:29108"/>
    </ligand>
</feature>
<feature type="binding site" evidence="1 3 4 5">
    <location>
        <position position="346"/>
    </location>
    <ligand>
        <name>Ca(2+)</name>
        <dbReference type="ChEBI" id="CHEBI:29108"/>
    </ligand>
</feature>
<feature type="binding site" evidence="3 4 5">
    <location>
        <position position="347"/>
    </location>
    <ligand>
        <name>Ca(2+)</name>
        <dbReference type="ChEBI" id="CHEBI:29108"/>
    </ligand>
</feature>
<feature type="binding site" evidence="1">
    <location>
        <position position="371"/>
    </location>
    <ligand>
        <name>substrate</name>
    </ligand>
</feature>
<feature type="glycosylation site" description="N-linked (GlcNAc...) asparagine; by host" evidence="1">
    <location>
        <position position="61"/>
    </location>
</feature>
<feature type="glycosylation site" description="N-linked (GlcNAc...) asparagine; by host" evidence="1">
    <location>
        <position position="69"/>
    </location>
</feature>
<feature type="glycosylation site" description="N-linked (GlcNAc...) asparagine; by host" evidence="1">
    <location>
        <position position="70"/>
    </location>
</feature>
<feature type="glycosylation site" description="N-linked (GlcNAc...) asparagine; by host" evidence="1 3 4 5">
    <location>
        <position position="86"/>
    </location>
</feature>
<feature type="glycosylation site" description="N-linked (GlcNAc...) asparagine; by host" evidence="3 4 5">
    <location>
        <position position="146"/>
    </location>
</feature>
<feature type="glycosylation site" description="N-linked (GlcNAc...) asparagine; by host" evidence="3 4 5">
    <location>
        <position position="200"/>
    </location>
</feature>
<feature type="glycosylation site" description="N-linked (GlcNAc...) asparagine; by host" evidence="1 4 5">
    <location>
        <position position="234"/>
    </location>
</feature>
<feature type="glycosylation site" description="N-linked (GlcNAc...) asparagine; by host" evidence="1">
    <location>
        <position position="402"/>
    </location>
</feature>
<feature type="disulfide bond" evidence="1">
    <location>
        <begin position="92"/>
        <end position="417"/>
    </location>
</feature>
<feature type="disulfide bond" evidence="1">
    <location>
        <begin position="124"/>
        <end position="129"/>
    </location>
</feature>
<feature type="disulfide bond">
    <location>
        <begin position="175"/>
        <end position="193"/>
    </location>
</feature>
<feature type="disulfide bond" evidence="1">
    <location>
        <begin position="183"/>
        <end position="230"/>
    </location>
</feature>
<feature type="disulfide bond" evidence="1">
    <location>
        <begin position="232"/>
        <end position="237"/>
    </location>
</feature>
<feature type="disulfide bond" evidence="1">
    <location>
        <begin position="278"/>
        <end position="291"/>
    </location>
</feature>
<feature type="disulfide bond" evidence="1">
    <location>
        <begin position="280"/>
        <end position="289"/>
    </location>
</feature>
<feature type="disulfide bond" evidence="1">
    <location>
        <begin position="318"/>
        <end position="337"/>
    </location>
</feature>
<feature type="disulfide bond" evidence="1">
    <location>
        <begin position="421"/>
        <end position="447"/>
    </location>
</feature>
<feature type="sequence conflict" description="In Ref. 3; AAO46245." ref="3">
    <original>E</original>
    <variation>D</variation>
    <location>
        <position position="41"/>
    </location>
</feature>
<feature type="strand" evidence="7">
    <location>
        <begin position="96"/>
        <end position="102"/>
    </location>
</feature>
<feature type="helix" evidence="7">
    <location>
        <begin position="105"/>
        <end position="108"/>
    </location>
</feature>
<feature type="turn" evidence="7">
    <location>
        <begin position="109"/>
        <end position="111"/>
    </location>
</feature>
<feature type="strand" evidence="7">
    <location>
        <begin position="121"/>
        <end position="124"/>
    </location>
</feature>
<feature type="strand" evidence="7">
    <location>
        <begin position="129"/>
        <end position="132"/>
    </location>
</feature>
<feature type="strand" evidence="7">
    <location>
        <begin position="137"/>
        <end position="139"/>
    </location>
</feature>
<feature type="turn" evidence="7">
    <location>
        <begin position="144"/>
        <end position="149"/>
    </location>
</feature>
<feature type="strand" evidence="8">
    <location>
        <begin position="157"/>
        <end position="162"/>
    </location>
</feature>
<feature type="strand" evidence="8">
    <location>
        <begin position="172"/>
        <end position="176"/>
    </location>
</feature>
<feature type="strand" evidence="7">
    <location>
        <begin position="178"/>
        <end position="184"/>
    </location>
</feature>
<feature type="strand" evidence="7">
    <location>
        <begin position="186"/>
        <end position="196"/>
    </location>
</feature>
<feature type="strand" evidence="7">
    <location>
        <begin position="198"/>
        <end position="207"/>
    </location>
</feature>
<feature type="strand" evidence="7">
    <location>
        <begin position="210"/>
        <end position="216"/>
    </location>
</feature>
<feature type="strand" evidence="7">
    <location>
        <begin position="218"/>
        <end position="221"/>
    </location>
</feature>
<feature type="strand" evidence="7">
    <location>
        <begin position="227"/>
        <end position="229"/>
    </location>
</feature>
<feature type="strand" evidence="7">
    <location>
        <begin position="231"/>
        <end position="233"/>
    </location>
</feature>
<feature type="strand" evidence="7">
    <location>
        <begin position="236"/>
        <end position="244"/>
    </location>
</feature>
<feature type="strand" evidence="9">
    <location>
        <begin position="246"/>
        <end position="248"/>
    </location>
</feature>
<feature type="strand" evidence="7">
    <location>
        <begin position="250"/>
        <end position="267"/>
    </location>
</feature>
<feature type="strand" evidence="7">
    <location>
        <begin position="276"/>
        <end position="281"/>
    </location>
</feature>
<feature type="strand" evidence="7">
    <location>
        <begin position="284"/>
        <end position="292"/>
    </location>
</feature>
<feature type="strand" evidence="7">
    <location>
        <begin position="294"/>
        <end position="296"/>
    </location>
</feature>
<feature type="strand" evidence="7">
    <location>
        <begin position="301"/>
        <end position="305"/>
    </location>
</feature>
<feature type="turn" evidence="7">
    <location>
        <begin position="307"/>
        <end position="309"/>
    </location>
</feature>
<feature type="strand" evidence="8">
    <location>
        <begin position="312"/>
        <end position="316"/>
    </location>
</feature>
<feature type="strand" evidence="6">
    <location>
        <begin position="319"/>
        <end position="321"/>
    </location>
</feature>
<feature type="strand" evidence="6">
    <location>
        <begin position="324"/>
        <end position="326"/>
    </location>
</feature>
<feature type="strand" evidence="7">
    <location>
        <begin position="330"/>
        <end position="332"/>
    </location>
</feature>
<feature type="strand" evidence="7">
    <location>
        <begin position="337"/>
        <end position="339"/>
    </location>
</feature>
<feature type="strand" evidence="7">
    <location>
        <begin position="353"/>
        <end position="356"/>
    </location>
</feature>
<feature type="strand" evidence="7">
    <location>
        <begin position="359"/>
        <end position="366"/>
    </location>
</feature>
<feature type="strand" evidence="7">
    <location>
        <begin position="368"/>
        <end position="371"/>
    </location>
</feature>
<feature type="strand" evidence="7">
    <location>
        <begin position="374"/>
        <end position="381"/>
    </location>
</feature>
<feature type="turn" evidence="7">
    <location>
        <begin position="382"/>
        <end position="384"/>
    </location>
</feature>
<feature type="strand" evidence="7">
    <location>
        <begin position="385"/>
        <end position="387"/>
    </location>
</feature>
<feature type="strand" evidence="7">
    <location>
        <begin position="390"/>
        <end position="393"/>
    </location>
</feature>
<feature type="strand" evidence="7">
    <location>
        <begin position="407"/>
        <end position="413"/>
    </location>
</feature>
<feature type="strand" evidence="7">
    <location>
        <begin position="415"/>
        <end position="429"/>
    </location>
</feature>
<feature type="turn" evidence="7">
    <location>
        <begin position="430"/>
        <end position="432"/>
    </location>
</feature>
<feature type="strand" evidence="8">
    <location>
        <begin position="435"/>
        <end position="437"/>
    </location>
</feature>
<feature type="strand" evidence="7">
    <location>
        <begin position="439"/>
        <end position="451"/>
    </location>
</feature>
<feature type="turn" evidence="7">
    <location>
        <begin position="464"/>
        <end position="466"/>
    </location>
</feature>